<organism>
    <name type="scientific">Nitrobacter winogradskyi (strain ATCC 25391 / DSM 10237 / CIP 104748 / NCIMB 11846 / Nb-255)</name>
    <dbReference type="NCBI Taxonomy" id="323098"/>
    <lineage>
        <taxon>Bacteria</taxon>
        <taxon>Pseudomonadati</taxon>
        <taxon>Pseudomonadota</taxon>
        <taxon>Alphaproteobacteria</taxon>
        <taxon>Hyphomicrobiales</taxon>
        <taxon>Nitrobacteraceae</taxon>
        <taxon>Nitrobacter</taxon>
    </lineage>
</organism>
<proteinExistence type="inferred from homology"/>
<dbReference type="EC" id="2.7.4.3" evidence="1"/>
<dbReference type="EMBL" id="CP000115">
    <property type="protein sequence ID" value="ABA04646.1"/>
    <property type="molecule type" value="Genomic_DNA"/>
</dbReference>
<dbReference type="SMR" id="Q3SSU5"/>
<dbReference type="STRING" id="323098.Nwi_1385"/>
<dbReference type="KEGG" id="nwi:Nwi_1385"/>
<dbReference type="eggNOG" id="COG0563">
    <property type="taxonomic scope" value="Bacteria"/>
</dbReference>
<dbReference type="HOGENOM" id="CLU_032354_1_2_5"/>
<dbReference type="OrthoDB" id="9805030at2"/>
<dbReference type="UniPathway" id="UPA00588">
    <property type="reaction ID" value="UER00649"/>
</dbReference>
<dbReference type="Proteomes" id="UP000002531">
    <property type="component" value="Chromosome"/>
</dbReference>
<dbReference type="GO" id="GO:0005737">
    <property type="term" value="C:cytoplasm"/>
    <property type="evidence" value="ECO:0007669"/>
    <property type="project" value="UniProtKB-SubCell"/>
</dbReference>
<dbReference type="GO" id="GO:0004017">
    <property type="term" value="F:adenylate kinase activity"/>
    <property type="evidence" value="ECO:0007669"/>
    <property type="project" value="UniProtKB-UniRule"/>
</dbReference>
<dbReference type="GO" id="GO:0005524">
    <property type="term" value="F:ATP binding"/>
    <property type="evidence" value="ECO:0007669"/>
    <property type="project" value="UniProtKB-UniRule"/>
</dbReference>
<dbReference type="GO" id="GO:0044209">
    <property type="term" value="P:AMP salvage"/>
    <property type="evidence" value="ECO:0007669"/>
    <property type="project" value="UniProtKB-UniRule"/>
</dbReference>
<dbReference type="CDD" id="cd01428">
    <property type="entry name" value="ADK"/>
    <property type="match status" value="1"/>
</dbReference>
<dbReference type="Gene3D" id="3.40.50.300">
    <property type="entry name" value="P-loop containing nucleotide triphosphate hydrolases"/>
    <property type="match status" value="1"/>
</dbReference>
<dbReference type="HAMAP" id="MF_00235">
    <property type="entry name" value="Adenylate_kinase_Adk"/>
    <property type="match status" value="1"/>
</dbReference>
<dbReference type="InterPro" id="IPR006259">
    <property type="entry name" value="Adenyl_kin_sub"/>
</dbReference>
<dbReference type="InterPro" id="IPR000850">
    <property type="entry name" value="Adenylat/UMP-CMP_kin"/>
</dbReference>
<dbReference type="InterPro" id="IPR033690">
    <property type="entry name" value="Adenylat_kinase_CS"/>
</dbReference>
<dbReference type="InterPro" id="IPR027417">
    <property type="entry name" value="P-loop_NTPase"/>
</dbReference>
<dbReference type="NCBIfam" id="TIGR01351">
    <property type="entry name" value="adk"/>
    <property type="match status" value="1"/>
</dbReference>
<dbReference type="NCBIfam" id="NF001381">
    <property type="entry name" value="PRK00279.1-3"/>
    <property type="match status" value="1"/>
</dbReference>
<dbReference type="NCBIfam" id="NF011100">
    <property type="entry name" value="PRK14527.1"/>
    <property type="match status" value="1"/>
</dbReference>
<dbReference type="NCBIfam" id="NF011104">
    <property type="entry name" value="PRK14531.1"/>
    <property type="match status" value="1"/>
</dbReference>
<dbReference type="NCBIfam" id="NF011105">
    <property type="entry name" value="PRK14532.1"/>
    <property type="match status" value="1"/>
</dbReference>
<dbReference type="PANTHER" id="PTHR23359">
    <property type="entry name" value="NUCLEOTIDE KINASE"/>
    <property type="match status" value="1"/>
</dbReference>
<dbReference type="Pfam" id="PF00406">
    <property type="entry name" value="ADK"/>
    <property type="match status" value="1"/>
</dbReference>
<dbReference type="PRINTS" id="PR00094">
    <property type="entry name" value="ADENYLTKNASE"/>
</dbReference>
<dbReference type="SUPFAM" id="SSF52540">
    <property type="entry name" value="P-loop containing nucleoside triphosphate hydrolases"/>
    <property type="match status" value="1"/>
</dbReference>
<dbReference type="PROSITE" id="PS00113">
    <property type="entry name" value="ADENYLATE_KINASE"/>
    <property type="match status" value="1"/>
</dbReference>
<name>KAD_NITWN</name>
<feature type="chain" id="PRO_1000058866" description="Adenylate kinase">
    <location>
        <begin position="1"/>
        <end position="206"/>
    </location>
</feature>
<feature type="region of interest" description="NMP" evidence="1">
    <location>
        <begin position="30"/>
        <end position="59"/>
    </location>
</feature>
<feature type="region of interest" description="LID" evidence="1">
    <location>
        <begin position="126"/>
        <end position="142"/>
    </location>
</feature>
<feature type="binding site" evidence="1">
    <location>
        <begin position="10"/>
        <end position="15"/>
    </location>
    <ligand>
        <name>ATP</name>
        <dbReference type="ChEBI" id="CHEBI:30616"/>
    </ligand>
</feature>
<feature type="binding site" evidence="1">
    <location>
        <position position="31"/>
    </location>
    <ligand>
        <name>AMP</name>
        <dbReference type="ChEBI" id="CHEBI:456215"/>
    </ligand>
</feature>
<feature type="binding site" evidence="1">
    <location>
        <position position="36"/>
    </location>
    <ligand>
        <name>AMP</name>
        <dbReference type="ChEBI" id="CHEBI:456215"/>
    </ligand>
</feature>
<feature type="binding site" evidence="1">
    <location>
        <begin position="57"/>
        <end position="59"/>
    </location>
    <ligand>
        <name>AMP</name>
        <dbReference type="ChEBI" id="CHEBI:456215"/>
    </ligand>
</feature>
<feature type="binding site" evidence="1">
    <location>
        <begin position="85"/>
        <end position="88"/>
    </location>
    <ligand>
        <name>AMP</name>
        <dbReference type="ChEBI" id="CHEBI:456215"/>
    </ligand>
</feature>
<feature type="binding site" evidence="1">
    <location>
        <position position="92"/>
    </location>
    <ligand>
        <name>AMP</name>
        <dbReference type="ChEBI" id="CHEBI:456215"/>
    </ligand>
</feature>
<feature type="binding site" evidence="1">
    <location>
        <position position="127"/>
    </location>
    <ligand>
        <name>ATP</name>
        <dbReference type="ChEBI" id="CHEBI:30616"/>
    </ligand>
</feature>
<feature type="binding site" evidence="1">
    <location>
        <position position="139"/>
    </location>
    <ligand>
        <name>AMP</name>
        <dbReference type="ChEBI" id="CHEBI:456215"/>
    </ligand>
</feature>
<feature type="binding site" evidence="1">
    <location>
        <position position="150"/>
    </location>
    <ligand>
        <name>AMP</name>
        <dbReference type="ChEBI" id="CHEBI:456215"/>
    </ligand>
</feature>
<feature type="binding site" evidence="1">
    <location>
        <position position="178"/>
    </location>
    <ligand>
        <name>ATP</name>
        <dbReference type="ChEBI" id="CHEBI:30616"/>
    </ligand>
</feature>
<protein>
    <recommendedName>
        <fullName evidence="1">Adenylate kinase</fullName>
        <shortName evidence="1">AK</shortName>
        <ecNumber evidence="1">2.7.4.3</ecNumber>
    </recommendedName>
    <alternativeName>
        <fullName evidence="1">ATP-AMP transphosphorylase</fullName>
    </alternativeName>
    <alternativeName>
        <fullName evidence="1">ATP:AMP phosphotransferase</fullName>
    </alternativeName>
    <alternativeName>
        <fullName evidence="1">Adenylate monophosphate kinase</fullName>
    </alternativeName>
</protein>
<sequence length="206" mass="22567">MRLILLGPPGAGKGTQAQRLVHHYGIIQLSTGDMLRAAVAAGTPVGLKAKDIMASGGLVPDDVVIGIISDRLEQADAKDGFILDGFPRTVPQAEALDILLQSKNLALDAVIELRVDESALLQRVENRVAETTARGEQVRADDNPEVLSQRLASYRALTEPLIRYYSERGRLLTVDGMMAIDDVTRDIRRVLRRSGVPMSKFGVRRW</sequence>
<comment type="function">
    <text evidence="1">Catalyzes the reversible transfer of the terminal phosphate group between ATP and AMP. Plays an important role in cellular energy homeostasis and in adenine nucleotide metabolism.</text>
</comment>
<comment type="catalytic activity">
    <reaction evidence="1">
        <text>AMP + ATP = 2 ADP</text>
        <dbReference type="Rhea" id="RHEA:12973"/>
        <dbReference type="ChEBI" id="CHEBI:30616"/>
        <dbReference type="ChEBI" id="CHEBI:456215"/>
        <dbReference type="ChEBI" id="CHEBI:456216"/>
        <dbReference type="EC" id="2.7.4.3"/>
    </reaction>
</comment>
<comment type="pathway">
    <text evidence="1">Purine metabolism; AMP biosynthesis via salvage pathway; AMP from ADP: step 1/1.</text>
</comment>
<comment type="subunit">
    <text evidence="1">Monomer.</text>
</comment>
<comment type="subcellular location">
    <subcellularLocation>
        <location evidence="1">Cytoplasm</location>
    </subcellularLocation>
</comment>
<comment type="domain">
    <text evidence="1">Consists of three domains, a large central CORE domain and two small peripheral domains, NMPbind and LID, which undergo movements during catalysis. The LID domain closes over the site of phosphoryl transfer upon ATP binding. Assembling and dissambling the active center during each catalytic cycle provides an effective means to prevent ATP hydrolysis.</text>
</comment>
<comment type="similarity">
    <text evidence="1">Belongs to the adenylate kinase family.</text>
</comment>
<keyword id="KW-0067">ATP-binding</keyword>
<keyword id="KW-0963">Cytoplasm</keyword>
<keyword id="KW-0418">Kinase</keyword>
<keyword id="KW-0545">Nucleotide biosynthesis</keyword>
<keyword id="KW-0547">Nucleotide-binding</keyword>
<keyword id="KW-1185">Reference proteome</keyword>
<keyword id="KW-0808">Transferase</keyword>
<accession>Q3SSU5</accession>
<evidence type="ECO:0000255" key="1">
    <source>
        <dbReference type="HAMAP-Rule" id="MF_00235"/>
    </source>
</evidence>
<gene>
    <name evidence="1" type="primary">adk</name>
    <name type="ordered locus">Nwi_1385</name>
</gene>
<reference key="1">
    <citation type="journal article" date="2006" name="Appl. Environ. Microbiol.">
        <title>Genome sequence of the chemolithoautotrophic nitrite-oxidizing bacterium Nitrobacter winogradskyi Nb-255.</title>
        <authorList>
            <person name="Starkenburg S.R."/>
            <person name="Chain P.S.G."/>
            <person name="Sayavedra-Soto L.A."/>
            <person name="Hauser L."/>
            <person name="Land M.L."/>
            <person name="Larimer F.W."/>
            <person name="Malfatti S.A."/>
            <person name="Klotz M.G."/>
            <person name="Bottomley P.J."/>
            <person name="Arp D.J."/>
            <person name="Hickey W.J."/>
        </authorList>
    </citation>
    <scope>NUCLEOTIDE SEQUENCE [LARGE SCALE GENOMIC DNA]</scope>
    <source>
        <strain>ATCC 25391 / DSM 10237 / CIP 104748 / NCIMB 11846 / Nb-255</strain>
    </source>
</reference>